<reference key="1">
    <citation type="journal article" date="2001" name="J. Bacteriol.">
        <title>Genome sequence and comparative analysis of the solvent-producing bacterium Clostridium acetobutylicum.</title>
        <authorList>
            <person name="Noelling J."/>
            <person name="Breton G."/>
            <person name="Omelchenko M.V."/>
            <person name="Makarova K.S."/>
            <person name="Zeng Q."/>
            <person name="Gibson R."/>
            <person name="Lee H.M."/>
            <person name="Dubois J."/>
            <person name="Qiu D."/>
            <person name="Hitti J."/>
            <person name="Wolf Y.I."/>
            <person name="Tatusov R.L."/>
            <person name="Sabathe F."/>
            <person name="Doucette-Stamm L.A."/>
            <person name="Soucaille P."/>
            <person name="Daly M.J."/>
            <person name="Bennett G.N."/>
            <person name="Koonin E.V."/>
            <person name="Smith D.R."/>
        </authorList>
    </citation>
    <scope>NUCLEOTIDE SEQUENCE [LARGE SCALE GENOMIC DNA]</scope>
    <source>
        <strain>ATCC 824 / DSM 792 / JCM 1419 / IAM 19013 / LMG 5710 / NBRC 13948 / NRRL B-527 / VKM B-1787 / 2291 / W</strain>
    </source>
</reference>
<name>MOAA_CLOAB</name>
<proteinExistence type="inferred from homology"/>
<feature type="chain" id="PRO_0000152955" description="GTP 3',8-cyclase">
    <location>
        <begin position="1"/>
        <end position="318"/>
    </location>
</feature>
<feature type="domain" description="Radical SAM core" evidence="2">
    <location>
        <begin position="4"/>
        <end position="218"/>
    </location>
</feature>
<feature type="binding site" evidence="1">
    <location>
        <position position="13"/>
    </location>
    <ligand>
        <name>GTP</name>
        <dbReference type="ChEBI" id="CHEBI:37565"/>
    </ligand>
</feature>
<feature type="binding site" evidence="1">
    <location>
        <position position="20"/>
    </location>
    <ligand>
        <name>[4Fe-4S] cluster</name>
        <dbReference type="ChEBI" id="CHEBI:49883"/>
        <label>1</label>
        <note>4Fe-4S-S-AdoMet</note>
    </ligand>
</feature>
<feature type="binding site" evidence="1">
    <location>
        <position position="24"/>
    </location>
    <ligand>
        <name>[4Fe-4S] cluster</name>
        <dbReference type="ChEBI" id="CHEBI:49883"/>
        <label>1</label>
        <note>4Fe-4S-S-AdoMet</note>
    </ligand>
</feature>
<feature type="binding site" evidence="1">
    <location>
        <position position="26"/>
    </location>
    <ligand>
        <name>S-adenosyl-L-methionine</name>
        <dbReference type="ChEBI" id="CHEBI:59789"/>
    </ligand>
</feature>
<feature type="binding site" evidence="1">
    <location>
        <position position="27"/>
    </location>
    <ligand>
        <name>[4Fe-4S] cluster</name>
        <dbReference type="ChEBI" id="CHEBI:49883"/>
        <label>1</label>
        <note>4Fe-4S-S-AdoMet</note>
    </ligand>
</feature>
<feature type="binding site" evidence="1">
    <location>
        <position position="62"/>
    </location>
    <ligand>
        <name>GTP</name>
        <dbReference type="ChEBI" id="CHEBI:37565"/>
    </ligand>
</feature>
<feature type="binding site" evidence="1">
    <location>
        <position position="66"/>
    </location>
    <ligand>
        <name>S-adenosyl-L-methionine</name>
        <dbReference type="ChEBI" id="CHEBI:59789"/>
    </ligand>
</feature>
<feature type="binding site" evidence="1">
    <location>
        <position position="93"/>
    </location>
    <ligand>
        <name>GTP</name>
        <dbReference type="ChEBI" id="CHEBI:37565"/>
    </ligand>
</feature>
<feature type="binding site" evidence="1">
    <location>
        <position position="117"/>
    </location>
    <ligand>
        <name>S-adenosyl-L-methionine</name>
        <dbReference type="ChEBI" id="CHEBI:59789"/>
    </ligand>
</feature>
<feature type="binding site" evidence="1">
    <location>
        <position position="154"/>
    </location>
    <ligand>
        <name>GTP</name>
        <dbReference type="ChEBI" id="CHEBI:37565"/>
    </ligand>
</feature>
<feature type="binding site" evidence="1">
    <location>
        <position position="188"/>
    </location>
    <ligand>
        <name>S-adenosyl-L-methionine</name>
        <dbReference type="ChEBI" id="CHEBI:59789"/>
    </ligand>
</feature>
<feature type="binding site" evidence="1">
    <location>
        <position position="248"/>
    </location>
    <ligand>
        <name>[4Fe-4S] cluster</name>
        <dbReference type="ChEBI" id="CHEBI:49883"/>
        <label>2</label>
        <note>4Fe-4S-substrate</note>
    </ligand>
</feature>
<feature type="binding site" evidence="1">
    <location>
        <position position="251"/>
    </location>
    <ligand>
        <name>[4Fe-4S] cluster</name>
        <dbReference type="ChEBI" id="CHEBI:49883"/>
        <label>2</label>
        <note>4Fe-4S-substrate</note>
    </ligand>
</feature>
<feature type="binding site" evidence="1">
    <location>
        <begin position="253"/>
        <end position="255"/>
    </location>
    <ligand>
        <name>GTP</name>
        <dbReference type="ChEBI" id="CHEBI:37565"/>
    </ligand>
</feature>
<feature type="binding site" evidence="1">
    <location>
        <position position="265"/>
    </location>
    <ligand>
        <name>[4Fe-4S] cluster</name>
        <dbReference type="ChEBI" id="CHEBI:49883"/>
        <label>2</label>
        <note>4Fe-4S-substrate</note>
    </ligand>
</feature>
<organism>
    <name type="scientific">Clostridium acetobutylicum (strain ATCC 824 / DSM 792 / JCM 1419 / IAM 19013 / LMG 5710 / NBRC 13948 / NRRL B-527 / VKM B-1787 / 2291 / W)</name>
    <dbReference type="NCBI Taxonomy" id="272562"/>
    <lineage>
        <taxon>Bacteria</taxon>
        <taxon>Bacillati</taxon>
        <taxon>Bacillota</taxon>
        <taxon>Clostridia</taxon>
        <taxon>Eubacteriales</taxon>
        <taxon>Clostridiaceae</taxon>
        <taxon>Clostridium</taxon>
    </lineage>
</organism>
<gene>
    <name evidence="1" type="primary">moaA</name>
    <name type="ordered locus">CA_C1993</name>
</gene>
<sequence>MIDKHGRNIDYLRISVTDRCNLRCIYCMPKMKGYIQENNKISCSDIFKLLRAAVSVGINKVRYTGGEPLLNEEISKIIYETSKLPQINDIAITTNGILLPQMAKDLKKAGLKRVNISLDTLKSDTFTKITNFNQITKVIDGIDTCLKLNLKPVKINTVLIKGINDLEVNDFVNLSREMPVEIRFIELMPIGEGAKIYEKGRVNIKELLMSRSDLIPIESLQNSTANMYKIKGGKGRIGYITPISCKFCSTCNKIRLTSMGTIKPCLHSNQEIDLKPYLNNEDVLVEKLKTIIFNKTFQHHINEENISRSKKMMYQIGG</sequence>
<dbReference type="EC" id="4.1.99.22" evidence="1"/>
<dbReference type="EMBL" id="AE001437">
    <property type="protein sequence ID" value="AAK79952.1"/>
    <property type="molecule type" value="Genomic_DNA"/>
</dbReference>
<dbReference type="PIR" id="E97145">
    <property type="entry name" value="E97145"/>
</dbReference>
<dbReference type="RefSeq" id="NP_348612.1">
    <property type="nucleotide sequence ID" value="NC_003030.1"/>
</dbReference>
<dbReference type="RefSeq" id="WP_010965293.1">
    <property type="nucleotide sequence ID" value="NC_003030.1"/>
</dbReference>
<dbReference type="SMR" id="Q97HL8"/>
<dbReference type="STRING" id="272562.CA_C1993"/>
<dbReference type="GeneID" id="44998481"/>
<dbReference type="KEGG" id="cac:CA_C1993"/>
<dbReference type="PATRIC" id="fig|272562.8.peg.2200"/>
<dbReference type="eggNOG" id="COG2896">
    <property type="taxonomic scope" value="Bacteria"/>
</dbReference>
<dbReference type="HOGENOM" id="CLU_009273_0_1_9"/>
<dbReference type="OrthoDB" id="9763993at2"/>
<dbReference type="UniPathway" id="UPA00344"/>
<dbReference type="Proteomes" id="UP000000814">
    <property type="component" value="Chromosome"/>
</dbReference>
<dbReference type="GO" id="GO:0051539">
    <property type="term" value="F:4 iron, 4 sulfur cluster binding"/>
    <property type="evidence" value="ECO:0007669"/>
    <property type="project" value="UniProtKB-UniRule"/>
</dbReference>
<dbReference type="GO" id="GO:0061799">
    <property type="term" value="F:cyclic pyranopterin monophosphate synthase activity"/>
    <property type="evidence" value="ECO:0007669"/>
    <property type="project" value="TreeGrafter"/>
</dbReference>
<dbReference type="GO" id="GO:0061798">
    <property type="term" value="F:GTP 3',8'-cyclase activity"/>
    <property type="evidence" value="ECO:0007669"/>
    <property type="project" value="UniProtKB-UniRule"/>
</dbReference>
<dbReference type="GO" id="GO:0005525">
    <property type="term" value="F:GTP binding"/>
    <property type="evidence" value="ECO:0007669"/>
    <property type="project" value="UniProtKB-UniRule"/>
</dbReference>
<dbReference type="GO" id="GO:0046872">
    <property type="term" value="F:metal ion binding"/>
    <property type="evidence" value="ECO:0007669"/>
    <property type="project" value="UniProtKB-KW"/>
</dbReference>
<dbReference type="GO" id="GO:1904047">
    <property type="term" value="F:S-adenosyl-L-methionine binding"/>
    <property type="evidence" value="ECO:0007669"/>
    <property type="project" value="UniProtKB-UniRule"/>
</dbReference>
<dbReference type="GO" id="GO:0006777">
    <property type="term" value="P:Mo-molybdopterin cofactor biosynthetic process"/>
    <property type="evidence" value="ECO:0007669"/>
    <property type="project" value="UniProtKB-UniRule"/>
</dbReference>
<dbReference type="CDD" id="cd01335">
    <property type="entry name" value="Radical_SAM"/>
    <property type="match status" value="1"/>
</dbReference>
<dbReference type="CDD" id="cd21117">
    <property type="entry name" value="Twitch_MoaA"/>
    <property type="match status" value="1"/>
</dbReference>
<dbReference type="Gene3D" id="3.20.20.70">
    <property type="entry name" value="Aldolase class I"/>
    <property type="match status" value="1"/>
</dbReference>
<dbReference type="HAMAP" id="MF_01225_B">
    <property type="entry name" value="MoaA_B"/>
    <property type="match status" value="1"/>
</dbReference>
<dbReference type="InterPro" id="IPR013785">
    <property type="entry name" value="Aldolase_TIM"/>
</dbReference>
<dbReference type="InterPro" id="IPR006638">
    <property type="entry name" value="Elp3/MiaA/NifB-like_rSAM"/>
</dbReference>
<dbReference type="InterPro" id="IPR013483">
    <property type="entry name" value="MoaA"/>
</dbReference>
<dbReference type="InterPro" id="IPR000385">
    <property type="entry name" value="MoaA_NifB_PqqE_Fe-S-bd_CS"/>
</dbReference>
<dbReference type="InterPro" id="IPR010505">
    <property type="entry name" value="MoaA_twitch"/>
</dbReference>
<dbReference type="InterPro" id="IPR050105">
    <property type="entry name" value="MoCo_biosynth_MoaA/MoaC"/>
</dbReference>
<dbReference type="InterPro" id="IPR007197">
    <property type="entry name" value="rSAM"/>
</dbReference>
<dbReference type="NCBIfam" id="TIGR02666">
    <property type="entry name" value="moaA"/>
    <property type="match status" value="1"/>
</dbReference>
<dbReference type="NCBIfam" id="NF001199">
    <property type="entry name" value="PRK00164.2-1"/>
    <property type="match status" value="1"/>
</dbReference>
<dbReference type="PANTHER" id="PTHR22960:SF0">
    <property type="entry name" value="MOLYBDENUM COFACTOR BIOSYNTHESIS PROTEIN 1"/>
    <property type="match status" value="1"/>
</dbReference>
<dbReference type="PANTHER" id="PTHR22960">
    <property type="entry name" value="MOLYBDOPTERIN COFACTOR SYNTHESIS PROTEIN A"/>
    <property type="match status" value="1"/>
</dbReference>
<dbReference type="Pfam" id="PF13353">
    <property type="entry name" value="Fer4_12"/>
    <property type="match status" value="1"/>
</dbReference>
<dbReference type="Pfam" id="PF06463">
    <property type="entry name" value="Mob_synth_C"/>
    <property type="match status" value="1"/>
</dbReference>
<dbReference type="Pfam" id="PF04055">
    <property type="entry name" value="Radical_SAM"/>
    <property type="match status" value="1"/>
</dbReference>
<dbReference type="SFLD" id="SFLDG01383">
    <property type="entry name" value="cyclic_pyranopterin_phosphate"/>
    <property type="match status" value="1"/>
</dbReference>
<dbReference type="SFLD" id="SFLDG01072">
    <property type="entry name" value="dehydrogenase_like"/>
    <property type="match status" value="1"/>
</dbReference>
<dbReference type="SMART" id="SM00729">
    <property type="entry name" value="Elp3"/>
    <property type="match status" value="1"/>
</dbReference>
<dbReference type="SUPFAM" id="SSF102114">
    <property type="entry name" value="Radical SAM enzymes"/>
    <property type="match status" value="1"/>
</dbReference>
<dbReference type="PROSITE" id="PS01305">
    <property type="entry name" value="MOAA_NIFB_PQQE"/>
    <property type="match status" value="1"/>
</dbReference>
<dbReference type="PROSITE" id="PS51918">
    <property type="entry name" value="RADICAL_SAM"/>
    <property type="match status" value="1"/>
</dbReference>
<accession>Q97HL8</accession>
<evidence type="ECO:0000255" key="1">
    <source>
        <dbReference type="HAMAP-Rule" id="MF_01225"/>
    </source>
</evidence>
<evidence type="ECO:0000255" key="2">
    <source>
        <dbReference type="PROSITE-ProRule" id="PRU01266"/>
    </source>
</evidence>
<protein>
    <recommendedName>
        <fullName evidence="1">GTP 3',8-cyclase</fullName>
        <ecNumber evidence="1">4.1.99.22</ecNumber>
    </recommendedName>
    <alternativeName>
        <fullName evidence="1">Molybdenum cofactor biosynthesis protein A</fullName>
    </alternativeName>
</protein>
<comment type="function">
    <text evidence="1">Catalyzes the cyclization of GTP to (8S)-3',8-cyclo-7,8-dihydroguanosine 5'-triphosphate.</text>
</comment>
<comment type="catalytic activity">
    <reaction evidence="1">
        <text>GTP + AH2 + S-adenosyl-L-methionine = (8S)-3',8-cyclo-7,8-dihydroguanosine 5'-triphosphate + 5'-deoxyadenosine + L-methionine + A + H(+)</text>
        <dbReference type="Rhea" id="RHEA:49576"/>
        <dbReference type="ChEBI" id="CHEBI:13193"/>
        <dbReference type="ChEBI" id="CHEBI:15378"/>
        <dbReference type="ChEBI" id="CHEBI:17319"/>
        <dbReference type="ChEBI" id="CHEBI:17499"/>
        <dbReference type="ChEBI" id="CHEBI:37565"/>
        <dbReference type="ChEBI" id="CHEBI:57844"/>
        <dbReference type="ChEBI" id="CHEBI:59789"/>
        <dbReference type="ChEBI" id="CHEBI:131766"/>
        <dbReference type="EC" id="4.1.99.22"/>
    </reaction>
</comment>
<comment type="cofactor">
    <cofactor evidence="1">
        <name>[4Fe-4S] cluster</name>
        <dbReference type="ChEBI" id="CHEBI:49883"/>
    </cofactor>
    <text evidence="1">Binds 2 [4Fe-4S] clusters. Binds 1 [4Fe-4S] cluster coordinated with 3 cysteines and an exchangeable S-adenosyl-L-methionine and 1 [4Fe-4S] cluster coordinated with 3 cysteines and the GTP-derived substrate.</text>
</comment>
<comment type="pathway">
    <text evidence="1">Cofactor biosynthesis; molybdopterin biosynthesis.</text>
</comment>
<comment type="subunit">
    <text evidence="1">Monomer and homodimer.</text>
</comment>
<comment type="similarity">
    <text evidence="1">Belongs to the radical SAM superfamily. MoaA family.</text>
</comment>
<keyword id="KW-0004">4Fe-4S</keyword>
<keyword id="KW-0342">GTP-binding</keyword>
<keyword id="KW-0408">Iron</keyword>
<keyword id="KW-0411">Iron-sulfur</keyword>
<keyword id="KW-0456">Lyase</keyword>
<keyword id="KW-0479">Metal-binding</keyword>
<keyword id="KW-0501">Molybdenum cofactor biosynthesis</keyword>
<keyword id="KW-0547">Nucleotide-binding</keyword>
<keyword id="KW-1185">Reference proteome</keyword>
<keyword id="KW-0949">S-adenosyl-L-methionine</keyword>